<evidence type="ECO:0000250" key="1">
    <source>
        <dbReference type="UniProtKB" id="P24864"/>
    </source>
</evidence>
<evidence type="ECO:0000256" key="2">
    <source>
        <dbReference type="SAM" id="MobiDB-lite"/>
    </source>
</evidence>
<evidence type="ECO:0000305" key="3"/>
<protein>
    <recommendedName>
        <fullName>G1/S-specific cyclin-E3</fullName>
    </recommendedName>
</protein>
<reference key="1">
    <citation type="journal article" date="1996" name="J. Cell Sci.">
        <title>Xenopus cyclin E, a nuclear phosphoprotein, accumulates when oocytes gain the ability to initiate DNA replication.</title>
        <authorList>
            <person name="Chevalier S."/>
            <person name="Couturier A."/>
            <person name="Chartrain I."/>
            <person name="le Guellec R."/>
            <person name="Beckhelling C."/>
            <person name="le Guellec K."/>
            <person name="Philippe M."/>
            <person name="Ford C.C."/>
        </authorList>
    </citation>
    <scope>NUCLEOTIDE SEQUENCE [MRNA]</scope>
    <source>
        <tissue>Egg</tissue>
    </source>
</reference>
<reference key="2">
    <citation type="submission" date="2005-02" db="EMBL/GenBank/DDBJ databases">
        <authorList>
            <consortium name="NIH - Xenopus Gene Collection (XGC) project"/>
        </authorList>
    </citation>
    <scope>NUCLEOTIDE SEQUENCE [LARGE SCALE MRNA]</scope>
    <source>
        <tissue>Egg</tissue>
    </source>
</reference>
<comment type="function">
    <text>Essential for the control of the cell cycle at the G1/S (start) transition.</text>
</comment>
<comment type="subunit">
    <text evidence="1">Interacts with CDK2 protein kinase to form a serine/threonine kinase holoenzyme complex. The cyclin subunit imparts substrate specificity to the complex.</text>
</comment>
<comment type="subcellular location">
    <subcellularLocation>
        <location evidence="1">Nucleus</location>
    </subcellularLocation>
</comment>
<comment type="PTM">
    <text evidence="1">Phosphorylation by CDK2 triggers its release from CDK2 and degradation via the ubiquitin proteasome pathway.</text>
</comment>
<comment type="similarity">
    <text evidence="3">Belongs to the cyclin family. Cyclin E subfamily.</text>
</comment>
<feature type="chain" id="PRO_0000080456" description="G1/S-specific cyclin-E3">
    <location>
        <begin position="1"/>
        <end position="408"/>
    </location>
</feature>
<feature type="region of interest" description="Disordered" evidence="2">
    <location>
        <begin position="1"/>
        <end position="23"/>
    </location>
</feature>
<feature type="region of interest" description="Disordered" evidence="2">
    <location>
        <begin position="66"/>
        <end position="86"/>
    </location>
</feature>
<feature type="region of interest" description="Disordered" evidence="2">
    <location>
        <begin position="385"/>
        <end position="408"/>
    </location>
</feature>
<feature type="compositionally biased region" description="Basic and acidic residues" evidence="2">
    <location>
        <begin position="398"/>
        <end position="408"/>
    </location>
</feature>
<feature type="modified residue" description="Phosphothreonine" evidence="1">
    <location>
        <position position="394"/>
    </location>
</feature>
<keyword id="KW-0131">Cell cycle</keyword>
<keyword id="KW-0132">Cell division</keyword>
<keyword id="KW-0195">Cyclin</keyword>
<keyword id="KW-0539">Nucleus</keyword>
<keyword id="KW-0597">Phosphoprotein</keyword>
<keyword id="KW-1185">Reference proteome</keyword>
<organism>
    <name type="scientific">Xenopus laevis</name>
    <name type="common">African clawed frog</name>
    <dbReference type="NCBI Taxonomy" id="8355"/>
    <lineage>
        <taxon>Eukaryota</taxon>
        <taxon>Metazoa</taxon>
        <taxon>Chordata</taxon>
        <taxon>Craniata</taxon>
        <taxon>Vertebrata</taxon>
        <taxon>Euteleostomi</taxon>
        <taxon>Amphibia</taxon>
        <taxon>Batrachia</taxon>
        <taxon>Anura</taxon>
        <taxon>Pipoidea</taxon>
        <taxon>Pipidae</taxon>
        <taxon>Xenopodinae</taxon>
        <taxon>Xenopus</taxon>
        <taxon>Xenopus</taxon>
    </lineage>
</organism>
<dbReference type="EMBL" id="L43513">
    <property type="protein sequence ID" value="AAA99425.1"/>
    <property type="molecule type" value="mRNA"/>
</dbReference>
<dbReference type="EMBL" id="BC090214">
    <property type="protein sequence ID" value="AAH90214.1"/>
    <property type="molecule type" value="mRNA"/>
</dbReference>
<dbReference type="RefSeq" id="NP_001081446.1">
    <property type="nucleotide sequence ID" value="NM_001087977.1"/>
</dbReference>
<dbReference type="SMR" id="O42575"/>
<dbReference type="BioGRID" id="99180">
    <property type="interactions" value="7"/>
</dbReference>
<dbReference type="GeneID" id="397841"/>
<dbReference type="KEGG" id="xla:397841"/>
<dbReference type="AGR" id="Xenbase:XB-GENE-972047"/>
<dbReference type="CTD" id="397841"/>
<dbReference type="Xenbase" id="XB-GENE-972047">
    <property type="gene designation" value="ccne1.S"/>
</dbReference>
<dbReference type="OrthoDB" id="5590282at2759"/>
<dbReference type="Proteomes" id="UP000186698">
    <property type="component" value="Chromosome 4S"/>
</dbReference>
<dbReference type="Bgee" id="397841">
    <property type="expression patterns" value="Expressed in egg cell and 19 other cell types or tissues"/>
</dbReference>
<dbReference type="GO" id="GO:0097134">
    <property type="term" value="C:cyclin E1-CDK2 complex"/>
    <property type="evidence" value="ECO:0000318"/>
    <property type="project" value="GO_Central"/>
</dbReference>
<dbReference type="GO" id="GO:0005737">
    <property type="term" value="C:cytoplasm"/>
    <property type="evidence" value="ECO:0000318"/>
    <property type="project" value="GO_Central"/>
</dbReference>
<dbReference type="GO" id="GO:0005815">
    <property type="term" value="C:microtubule organizing center"/>
    <property type="evidence" value="ECO:0000318"/>
    <property type="project" value="GO_Central"/>
</dbReference>
<dbReference type="GO" id="GO:0005634">
    <property type="term" value="C:nucleus"/>
    <property type="evidence" value="ECO:0000318"/>
    <property type="project" value="GO_Central"/>
</dbReference>
<dbReference type="GO" id="GO:0016538">
    <property type="term" value="F:cyclin-dependent protein serine/threonine kinase regulator activity"/>
    <property type="evidence" value="ECO:0000318"/>
    <property type="project" value="GO_Central"/>
</dbReference>
<dbReference type="GO" id="GO:0051301">
    <property type="term" value="P:cell division"/>
    <property type="evidence" value="ECO:0007669"/>
    <property type="project" value="UniProtKB-KW"/>
</dbReference>
<dbReference type="GO" id="GO:0000082">
    <property type="term" value="P:G1/S transition of mitotic cell cycle"/>
    <property type="evidence" value="ECO:0000318"/>
    <property type="project" value="GO_Central"/>
</dbReference>
<dbReference type="GO" id="GO:1900087">
    <property type="term" value="P:positive regulation of G1/S transition of mitotic cell cycle"/>
    <property type="evidence" value="ECO:0000318"/>
    <property type="project" value="GO_Central"/>
</dbReference>
<dbReference type="CDD" id="cd20579">
    <property type="entry name" value="CYCLIN_CCNE1_rpt1"/>
    <property type="match status" value="1"/>
</dbReference>
<dbReference type="CDD" id="cd20581">
    <property type="entry name" value="CYCLIN_CCNE1_rpt2"/>
    <property type="match status" value="1"/>
</dbReference>
<dbReference type="FunFam" id="1.10.472.10:FF:000024">
    <property type="entry name" value="G1/S-specific cyclin-E1"/>
    <property type="match status" value="1"/>
</dbReference>
<dbReference type="Gene3D" id="1.10.472.10">
    <property type="entry name" value="Cyclin-like"/>
    <property type="match status" value="2"/>
</dbReference>
<dbReference type="InterPro" id="IPR039361">
    <property type="entry name" value="Cyclin"/>
</dbReference>
<dbReference type="InterPro" id="IPR013763">
    <property type="entry name" value="Cyclin-like_dom"/>
</dbReference>
<dbReference type="InterPro" id="IPR036915">
    <property type="entry name" value="Cyclin-like_sf"/>
</dbReference>
<dbReference type="InterPro" id="IPR004367">
    <property type="entry name" value="Cyclin_C-dom"/>
</dbReference>
<dbReference type="InterPro" id="IPR006671">
    <property type="entry name" value="Cyclin_N"/>
</dbReference>
<dbReference type="InterPro" id="IPR048258">
    <property type="entry name" value="Cyclins_cyclin-box"/>
</dbReference>
<dbReference type="PANTHER" id="PTHR10177">
    <property type="entry name" value="CYCLINS"/>
    <property type="match status" value="1"/>
</dbReference>
<dbReference type="Pfam" id="PF02984">
    <property type="entry name" value="Cyclin_C"/>
    <property type="match status" value="1"/>
</dbReference>
<dbReference type="Pfam" id="PF00134">
    <property type="entry name" value="Cyclin_N"/>
    <property type="match status" value="1"/>
</dbReference>
<dbReference type="SMART" id="SM00385">
    <property type="entry name" value="CYCLIN"/>
    <property type="match status" value="1"/>
</dbReference>
<dbReference type="SMART" id="SM01332">
    <property type="entry name" value="Cyclin_C"/>
    <property type="match status" value="1"/>
</dbReference>
<dbReference type="SUPFAM" id="SSF47954">
    <property type="entry name" value="Cyclin-like"/>
    <property type="match status" value="2"/>
</dbReference>
<dbReference type="PROSITE" id="PS00292">
    <property type="entry name" value="CYCLINS"/>
    <property type="match status" value="1"/>
</dbReference>
<sequence>MPVIRNPAAEKSTKDERTASCTVRSRKRKADVAIFLQDPDDTLDCLEMTKKKQYQDRGQLSNEMTCKSPHKLIPTPEKEEHEPNPTSYPHFASLRFSPVSASPLPRLGWANQDDVWRNMLNKDRIYLRDKNFFEKHPQLQPNMRAILLDWLMEVCEVYKLHRETFYLAQDFFDRFMATQKNVIKSRLQLIGITSLFIAAKMEEIYPPKLHQFAFITDCACTEDEITSMELIIMKDLDWCLSPMTMVSWFNVFLQVAYIRELQHFLRPQFPQEVYIQIVQLLDLCVLDICCLDYPYGVLAASALYHFSCPELMEKVSGFKLTELQGCIKWLVPFAMAIKDGGKSKLKFFKGVDIEDVHNIQTHTGCLELMEKVHINRAVLEEQNRASPIPSGVLTPPQSDKKQKSDPAD</sequence>
<name>CCNE3_XENLA</name>
<accession>O42575</accession>
<accession>Q5EAX0</accession>
<proteinExistence type="evidence at transcript level"/>
<gene>
    <name type="primary">cyce3</name>
</gene>